<organism>
    <name type="scientific">Tropheryma whipplei (strain TW08/27)</name>
    <name type="common">Whipple's bacillus</name>
    <dbReference type="NCBI Taxonomy" id="218496"/>
    <lineage>
        <taxon>Bacteria</taxon>
        <taxon>Bacillati</taxon>
        <taxon>Actinomycetota</taxon>
        <taxon>Actinomycetes</taxon>
        <taxon>Micrococcales</taxon>
        <taxon>Tropherymataceae</taxon>
        <taxon>Tropheryma</taxon>
    </lineage>
</organism>
<proteinExistence type="inferred from homology"/>
<accession>Q83HY2</accession>
<gene>
    <name evidence="1" type="primary">atpA</name>
    <name type="ordered locus">TW342</name>
</gene>
<keyword id="KW-0066">ATP synthesis</keyword>
<keyword id="KW-0067">ATP-binding</keyword>
<keyword id="KW-1003">Cell membrane</keyword>
<keyword id="KW-0139">CF(1)</keyword>
<keyword id="KW-0375">Hydrogen ion transport</keyword>
<keyword id="KW-0406">Ion transport</keyword>
<keyword id="KW-0472">Membrane</keyword>
<keyword id="KW-0547">Nucleotide-binding</keyword>
<keyword id="KW-1278">Translocase</keyword>
<keyword id="KW-0813">Transport</keyword>
<comment type="function">
    <text evidence="1">Produces ATP from ADP in the presence of a proton gradient across the membrane. The alpha chain is a regulatory subunit.</text>
</comment>
<comment type="catalytic activity">
    <reaction evidence="1">
        <text>ATP + H2O + 4 H(+)(in) = ADP + phosphate + 5 H(+)(out)</text>
        <dbReference type="Rhea" id="RHEA:57720"/>
        <dbReference type="ChEBI" id="CHEBI:15377"/>
        <dbReference type="ChEBI" id="CHEBI:15378"/>
        <dbReference type="ChEBI" id="CHEBI:30616"/>
        <dbReference type="ChEBI" id="CHEBI:43474"/>
        <dbReference type="ChEBI" id="CHEBI:456216"/>
        <dbReference type="EC" id="7.1.2.2"/>
    </reaction>
</comment>
<comment type="subunit">
    <text evidence="1">F-type ATPases have 2 components, CF(1) - the catalytic core - and CF(0) - the membrane proton channel. CF(1) has five subunits: alpha(3), beta(3), gamma(1), delta(1), epsilon(1). CF(0) has three main subunits: a(1), b(2) and c(9-12). The alpha and beta chains form an alternating ring which encloses part of the gamma chain. CF(1) is attached to CF(0) by a central stalk formed by the gamma and epsilon chains, while a peripheral stalk is formed by the delta and b chains.</text>
</comment>
<comment type="subcellular location">
    <subcellularLocation>
        <location evidence="1">Cell membrane</location>
        <topology evidence="1">Peripheral membrane protein</topology>
    </subcellularLocation>
</comment>
<comment type="similarity">
    <text evidence="1">Belongs to the ATPase alpha/beta chains family.</text>
</comment>
<reference key="1">
    <citation type="journal article" date="2003" name="Lancet">
        <title>Sequencing and analysis of the genome of the Whipple's disease bacterium Tropheryma whipplei.</title>
        <authorList>
            <person name="Bentley S.D."/>
            <person name="Maiwald M."/>
            <person name="Murphy L.D."/>
            <person name="Pallen M.J."/>
            <person name="Yeats C.A."/>
            <person name="Dover L.G."/>
            <person name="Norbertczak H.T."/>
            <person name="Besra G.S."/>
            <person name="Quail M.A."/>
            <person name="Harris D.E."/>
            <person name="von Herbay A."/>
            <person name="Goble A."/>
            <person name="Rutter S."/>
            <person name="Squares R."/>
            <person name="Squares S."/>
            <person name="Barrell B.G."/>
            <person name="Parkhill J."/>
            <person name="Relman D.A."/>
        </authorList>
    </citation>
    <scope>NUCLEOTIDE SEQUENCE [LARGE SCALE GENOMIC DNA]</scope>
    <source>
        <strain>TW08/27</strain>
    </source>
</reference>
<evidence type="ECO:0000255" key="1">
    <source>
        <dbReference type="HAMAP-Rule" id="MF_01346"/>
    </source>
</evidence>
<name>ATPA_TROW8</name>
<feature type="chain" id="PRO_0000238391" description="ATP synthase subunit alpha">
    <location>
        <begin position="1"/>
        <end position="542"/>
    </location>
</feature>
<feature type="binding site" evidence="1">
    <location>
        <begin position="176"/>
        <end position="183"/>
    </location>
    <ligand>
        <name>ATP</name>
        <dbReference type="ChEBI" id="CHEBI:30616"/>
    </ligand>
</feature>
<feature type="site" description="Required for activity" evidence="1">
    <location>
        <position position="375"/>
    </location>
</feature>
<dbReference type="EC" id="7.1.2.2" evidence="1"/>
<dbReference type="EMBL" id="BX251411">
    <property type="protein sequence ID" value="CAD67014.1"/>
    <property type="molecule type" value="Genomic_DNA"/>
</dbReference>
<dbReference type="RefSeq" id="WP_011096294.1">
    <property type="nucleotide sequence ID" value="NC_004551.1"/>
</dbReference>
<dbReference type="SMR" id="Q83HY2"/>
<dbReference type="GeneID" id="67388115"/>
<dbReference type="KEGG" id="tws:TW342"/>
<dbReference type="HOGENOM" id="CLU_010091_2_1_11"/>
<dbReference type="GO" id="GO:0005886">
    <property type="term" value="C:plasma membrane"/>
    <property type="evidence" value="ECO:0007669"/>
    <property type="project" value="UniProtKB-SubCell"/>
</dbReference>
<dbReference type="GO" id="GO:0045259">
    <property type="term" value="C:proton-transporting ATP synthase complex"/>
    <property type="evidence" value="ECO:0007669"/>
    <property type="project" value="UniProtKB-KW"/>
</dbReference>
<dbReference type="GO" id="GO:0043531">
    <property type="term" value="F:ADP binding"/>
    <property type="evidence" value="ECO:0007669"/>
    <property type="project" value="TreeGrafter"/>
</dbReference>
<dbReference type="GO" id="GO:0005524">
    <property type="term" value="F:ATP binding"/>
    <property type="evidence" value="ECO:0007669"/>
    <property type="project" value="UniProtKB-UniRule"/>
</dbReference>
<dbReference type="GO" id="GO:0046933">
    <property type="term" value="F:proton-transporting ATP synthase activity, rotational mechanism"/>
    <property type="evidence" value="ECO:0007669"/>
    <property type="project" value="UniProtKB-UniRule"/>
</dbReference>
<dbReference type="CDD" id="cd18113">
    <property type="entry name" value="ATP-synt_F1_alpha_C"/>
    <property type="match status" value="1"/>
</dbReference>
<dbReference type="CDD" id="cd18116">
    <property type="entry name" value="ATP-synt_F1_alpha_N"/>
    <property type="match status" value="1"/>
</dbReference>
<dbReference type="CDD" id="cd01132">
    <property type="entry name" value="F1-ATPase_alpha_CD"/>
    <property type="match status" value="1"/>
</dbReference>
<dbReference type="FunFam" id="1.20.150.20:FF:000001">
    <property type="entry name" value="ATP synthase subunit alpha"/>
    <property type="match status" value="1"/>
</dbReference>
<dbReference type="FunFam" id="3.40.50.300:FF:000002">
    <property type="entry name" value="ATP synthase subunit alpha"/>
    <property type="match status" value="1"/>
</dbReference>
<dbReference type="Gene3D" id="2.40.30.20">
    <property type="match status" value="1"/>
</dbReference>
<dbReference type="Gene3D" id="1.20.150.20">
    <property type="entry name" value="ATP synthase alpha/beta chain, C-terminal domain"/>
    <property type="match status" value="1"/>
</dbReference>
<dbReference type="Gene3D" id="3.40.50.300">
    <property type="entry name" value="P-loop containing nucleotide triphosphate hydrolases"/>
    <property type="match status" value="1"/>
</dbReference>
<dbReference type="HAMAP" id="MF_01346">
    <property type="entry name" value="ATP_synth_alpha_bact"/>
    <property type="match status" value="1"/>
</dbReference>
<dbReference type="InterPro" id="IPR023366">
    <property type="entry name" value="ATP_synth_asu-like_sf"/>
</dbReference>
<dbReference type="InterPro" id="IPR000793">
    <property type="entry name" value="ATP_synth_asu_C"/>
</dbReference>
<dbReference type="InterPro" id="IPR038376">
    <property type="entry name" value="ATP_synth_asu_C_sf"/>
</dbReference>
<dbReference type="InterPro" id="IPR033732">
    <property type="entry name" value="ATP_synth_F1_a_nt-bd_dom"/>
</dbReference>
<dbReference type="InterPro" id="IPR005294">
    <property type="entry name" value="ATP_synth_F1_asu"/>
</dbReference>
<dbReference type="InterPro" id="IPR020003">
    <property type="entry name" value="ATPase_a/bsu_AS"/>
</dbReference>
<dbReference type="InterPro" id="IPR004100">
    <property type="entry name" value="ATPase_F1/V1/A1_a/bsu_N"/>
</dbReference>
<dbReference type="InterPro" id="IPR036121">
    <property type="entry name" value="ATPase_F1/V1/A1_a/bsu_N_sf"/>
</dbReference>
<dbReference type="InterPro" id="IPR000194">
    <property type="entry name" value="ATPase_F1/V1/A1_a/bsu_nucl-bd"/>
</dbReference>
<dbReference type="InterPro" id="IPR027417">
    <property type="entry name" value="P-loop_NTPase"/>
</dbReference>
<dbReference type="NCBIfam" id="TIGR00962">
    <property type="entry name" value="atpA"/>
    <property type="match status" value="1"/>
</dbReference>
<dbReference type="NCBIfam" id="NF009884">
    <property type="entry name" value="PRK13343.1"/>
    <property type="match status" value="1"/>
</dbReference>
<dbReference type="PANTHER" id="PTHR48082">
    <property type="entry name" value="ATP SYNTHASE SUBUNIT ALPHA, MITOCHONDRIAL"/>
    <property type="match status" value="1"/>
</dbReference>
<dbReference type="PANTHER" id="PTHR48082:SF2">
    <property type="entry name" value="ATP SYNTHASE SUBUNIT ALPHA, MITOCHONDRIAL"/>
    <property type="match status" value="1"/>
</dbReference>
<dbReference type="Pfam" id="PF00006">
    <property type="entry name" value="ATP-synt_ab"/>
    <property type="match status" value="1"/>
</dbReference>
<dbReference type="Pfam" id="PF00306">
    <property type="entry name" value="ATP-synt_ab_C"/>
    <property type="match status" value="1"/>
</dbReference>
<dbReference type="Pfam" id="PF02874">
    <property type="entry name" value="ATP-synt_ab_N"/>
    <property type="match status" value="1"/>
</dbReference>
<dbReference type="SUPFAM" id="SSF47917">
    <property type="entry name" value="C-terminal domain of alpha and beta subunits of F1 ATP synthase"/>
    <property type="match status" value="1"/>
</dbReference>
<dbReference type="SUPFAM" id="SSF50615">
    <property type="entry name" value="N-terminal domain of alpha and beta subunits of F1 ATP synthase"/>
    <property type="match status" value="1"/>
</dbReference>
<dbReference type="SUPFAM" id="SSF52540">
    <property type="entry name" value="P-loop containing nucleoside triphosphate hydrolases"/>
    <property type="match status" value="1"/>
</dbReference>
<dbReference type="PROSITE" id="PS00152">
    <property type="entry name" value="ATPASE_ALPHA_BETA"/>
    <property type="match status" value="1"/>
</dbReference>
<protein>
    <recommendedName>
        <fullName evidence="1">ATP synthase subunit alpha</fullName>
        <ecNumber evidence="1">7.1.2.2</ecNumber>
    </recommendedName>
    <alternativeName>
        <fullName evidence="1">ATP synthase F1 sector subunit alpha</fullName>
    </alternativeName>
    <alternativeName>
        <fullName evidence="1">F-ATPase subunit alpha</fullName>
    </alternativeName>
</protein>
<sequence>MSKQPIITSEEVRGVIRNLLDSTLSAAREANEFEVGRVVDAADGVAHIEGLPALMASELVEFSNGTFGVTLNLDEDLAGVVVLGEFDGIVEGMDVRSTGRVLSIPVGDAFLGRVVDPLGRPVDGLGEVPHETYRELELQAAGVMQRRSVHEPIQTGIKAIDTMIPIGRGQRQLIIGDRQTGKTTIAIDTIINQKDNWSDPEKRVFCIYVAIGQKGSTIAGVKRVLEEAGCMEYTTIVATPASDPAGFKYIAPYSGSAIGQHWMYQGRHVLIVFDDLSKQAEAYRAISLLLRRPPGREAYPGDVFYLHSRLLERCAKLSDEMGGGSMTGLPIIETKANDISAYIPTNVISITDGQIFLQSDLFNANQRPAVDVGISVSRVGGDAQIKSIKKVSGMLKLELAQYRALEAFSMFASDLDAVSRRQLDRGARLSELLRQQQQSPYPVEDQVVSIWVGSNGYIDDIPLSDVLDFERDLLEYLRNRTSILDDLRTCGDLTDALLERLKEAVESFKNKVYFMRVDEREKDPLEDENIGQEELVRSRRAN</sequence>